<proteinExistence type="evidence at protein level"/>
<organism>
    <name type="scientific">Schizosaccharomyces pombe (strain 972 / ATCC 24843)</name>
    <name type="common">Fission yeast</name>
    <dbReference type="NCBI Taxonomy" id="284812"/>
    <lineage>
        <taxon>Eukaryota</taxon>
        <taxon>Fungi</taxon>
        <taxon>Dikarya</taxon>
        <taxon>Ascomycota</taxon>
        <taxon>Taphrinomycotina</taxon>
        <taxon>Schizosaccharomycetes</taxon>
        <taxon>Schizosaccharomycetales</taxon>
        <taxon>Schizosaccharomycetaceae</taxon>
        <taxon>Schizosaccharomyces</taxon>
    </lineage>
</organism>
<keyword id="KW-0002">3D-structure</keyword>
<keyword id="KW-0963">Cytoplasm</keyword>
<keyword id="KW-0507">mRNA processing</keyword>
<keyword id="KW-0508">mRNA splicing</keyword>
<keyword id="KW-0539">Nucleus</keyword>
<keyword id="KW-1185">Reference proteome</keyword>
<keyword id="KW-0687">Ribonucleoprotein</keyword>
<comment type="function">
    <text evidence="1">Plays a role in pre-mRNA splicing as a core component of the spliceosomal U1, U2, U4 and U5 small nuclear ribonucleoproteins (snRNPs), the building blocks of the spliceosome (By similarity).</text>
</comment>
<comment type="subunit">
    <text evidence="3">Belongs to the 40S cdc5-associated complex (or cwf complex), a spliceosome sub-complex reminiscent of a late-stage spliceosome composed of the U2, U5 and U6 snRNAs and at least brr2, cdc5, cwf2/prp3, cwf3/syf1, cwf4/syf3, cwf5/ecm2, spp42/cwf6, cwf7/spf27, cwf8, cwf9, cwf10, cwf11, cwf12, prp45/cwf13, cwf14, cwf15, cwf16, cwf17, cwf18, cwf19, cwf20, cwf21, cwf22, cwf23, cwf24, cwf25, cwf26, cyp7/cwf27, cwf28, cwf29/ist3, lea1, msl1, prp5/cwf1, prp10, prp12/sap130, prp17, prp22, sap61, sap62, sap114, sap145, slu7, smb1, smd1, smd3, smf1, smg1 and syf2.</text>
</comment>
<comment type="subcellular location">
    <subcellularLocation>
        <location evidence="4">Nucleus</location>
    </subcellularLocation>
    <subcellularLocation>
        <location evidence="1">Cytoplasm</location>
        <location evidence="1">Cytosol</location>
    </subcellularLocation>
</comment>
<comment type="similarity">
    <text evidence="5">Belongs to the snRNP core protein family.</text>
</comment>
<evidence type="ECO:0000250" key="1">
    <source>
        <dbReference type="UniProtKB" id="P62316"/>
    </source>
</evidence>
<evidence type="ECO:0000255" key="2">
    <source>
        <dbReference type="PROSITE-ProRule" id="PRU01346"/>
    </source>
</evidence>
<evidence type="ECO:0000269" key="3">
    <source>
    </source>
</evidence>
<evidence type="ECO:0000269" key="4">
    <source>
    </source>
</evidence>
<evidence type="ECO:0000305" key="5"/>
<evidence type="ECO:0007829" key="6">
    <source>
        <dbReference type="PDB" id="9ESI"/>
    </source>
</evidence>
<sequence length="115" mass="13095">MADLVDKPRSELSEIELARLEEYEFSAGPLSVLQQAVKNHDQVLINCRNNKKLLARVKAFDRHSNMVLENVKEMWTEKKRTASGKKGKAINKDRFISKMFLRGDGVVLVVRIPSA</sequence>
<feature type="chain" id="PRO_0000122212" description="Small nuclear ribonucleoprotein Sm D2">
    <location>
        <begin position="1"/>
        <end position="115"/>
    </location>
</feature>
<feature type="domain" description="Sm" evidence="2">
    <location>
        <begin position="30"/>
        <end position="115"/>
    </location>
</feature>
<feature type="helix" evidence="6">
    <location>
        <begin position="14"/>
        <end position="27"/>
    </location>
</feature>
<feature type="helix" evidence="6">
    <location>
        <begin position="31"/>
        <end position="39"/>
    </location>
</feature>
<feature type="strand" evidence="6">
    <location>
        <begin position="42"/>
        <end position="47"/>
    </location>
</feature>
<feature type="strand" evidence="6">
    <location>
        <begin position="52"/>
        <end position="59"/>
    </location>
</feature>
<feature type="strand" evidence="6">
    <location>
        <begin position="66"/>
        <end position="76"/>
    </location>
</feature>
<feature type="strand" evidence="6">
    <location>
        <begin position="91"/>
        <end position="101"/>
    </location>
</feature>
<feature type="helix" evidence="6">
    <location>
        <begin position="103"/>
        <end position="105"/>
    </location>
</feature>
<feature type="strand" evidence="6">
    <location>
        <begin position="106"/>
        <end position="112"/>
    </location>
</feature>
<accession>O14036</accession>
<name>SMD2_SCHPO</name>
<protein>
    <recommendedName>
        <fullName>Small nuclear ribonucleoprotein Sm D2</fullName>
        <shortName>Sm-D2</shortName>
    </recommendedName>
    <alternativeName>
        <fullName>Complexed with cdc5 protein 9</fullName>
    </alternativeName>
    <alternativeName>
        <fullName>snRNP core protein D2</fullName>
    </alternativeName>
</protein>
<reference key="1">
    <citation type="journal article" date="2002" name="Nature">
        <title>The genome sequence of Schizosaccharomyces pombe.</title>
        <authorList>
            <person name="Wood V."/>
            <person name="Gwilliam R."/>
            <person name="Rajandream M.A."/>
            <person name="Lyne M.H."/>
            <person name="Lyne R."/>
            <person name="Stewart A."/>
            <person name="Sgouros J.G."/>
            <person name="Peat N."/>
            <person name="Hayles J."/>
            <person name="Baker S.G."/>
            <person name="Basham D."/>
            <person name="Bowman S."/>
            <person name="Brooks K."/>
            <person name="Brown D."/>
            <person name="Brown S."/>
            <person name="Chillingworth T."/>
            <person name="Churcher C.M."/>
            <person name="Collins M."/>
            <person name="Connor R."/>
            <person name="Cronin A."/>
            <person name="Davis P."/>
            <person name="Feltwell T."/>
            <person name="Fraser A."/>
            <person name="Gentles S."/>
            <person name="Goble A."/>
            <person name="Hamlin N."/>
            <person name="Harris D.E."/>
            <person name="Hidalgo J."/>
            <person name="Hodgson G."/>
            <person name="Holroyd S."/>
            <person name="Hornsby T."/>
            <person name="Howarth S."/>
            <person name="Huckle E.J."/>
            <person name="Hunt S."/>
            <person name="Jagels K."/>
            <person name="James K.D."/>
            <person name="Jones L."/>
            <person name="Jones M."/>
            <person name="Leather S."/>
            <person name="McDonald S."/>
            <person name="McLean J."/>
            <person name="Mooney P."/>
            <person name="Moule S."/>
            <person name="Mungall K.L."/>
            <person name="Murphy L.D."/>
            <person name="Niblett D."/>
            <person name="Odell C."/>
            <person name="Oliver K."/>
            <person name="O'Neil S."/>
            <person name="Pearson D."/>
            <person name="Quail M.A."/>
            <person name="Rabbinowitsch E."/>
            <person name="Rutherford K.M."/>
            <person name="Rutter S."/>
            <person name="Saunders D."/>
            <person name="Seeger K."/>
            <person name="Sharp S."/>
            <person name="Skelton J."/>
            <person name="Simmonds M.N."/>
            <person name="Squares R."/>
            <person name="Squares S."/>
            <person name="Stevens K."/>
            <person name="Taylor K."/>
            <person name="Taylor R.G."/>
            <person name="Tivey A."/>
            <person name="Walsh S.V."/>
            <person name="Warren T."/>
            <person name="Whitehead S."/>
            <person name="Woodward J.R."/>
            <person name="Volckaert G."/>
            <person name="Aert R."/>
            <person name="Robben J."/>
            <person name="Grymonprez B."/>
            <person name="Weltjens I."/>
            <person name="Vanstreels E."/>
            <person name="Rieger M."/>
            <person name="Schaefer M."/>
            <person name="Mueller-Auer S."/>
            <person name="Gabel C."/>
            <person name="Fuchs M."/>
            <person name="Duesterhoeft A."/>
            <person name="Fritzc C."/>
            <person name="Holzer E."/>
            <person name="Moestl D."/>
            <person name="Hilbert H."/>
            <person name="Borzym K."/>
            <person name="Langer I."/>
            <person name="Beck A."/>
            <person name="Lehrach H."/>
            <person name="Reinhardt R."/>
            <person name="Pohl T.M."/>
            <person name="Eger P."/>
            <person name="Zimmermann W."/>
            <person name="Wedler H."/>
            <person name="Wambutt R."/>
            <person name="Purnelle B."/>
            <person name="Goffeau A."/>
            <person name="Cadieu E."/>
            <person name="Dreano S."/>
            <person name="Gloux S."/>
            <person name="Lelaure V."/>
            <person name="Mottier S."/>
            <person name="Galibert F."/>
            <person name="Aves S.J."/>
            <person name="Xiang Z."/>
            <person name="Hunt C."/>
            <person name="Moore K."/>
            <person name="Hurst S.M."/>
            <person name="Lucas M."/>
            <person name="Rochet M."/>
            <person name="Gaillardin C."/>
            <person name="Tallada V.A."/>
            <person name="Garzon A."/>
            <person name="Thode G."/>
            <person name="Daga R.R."/>
            <person name="Cruzado L."/>
            <person name="Jimenez J."/>
            <person name="Sanchez M."/>
            <person name="del Rey F."/>
            <person name="Benito J."/>
            <person name="Dominguez A."/>
            <person name="Revuelta J.L."/>
            <person name="Moreno S."/>
            <person name="Armstrong J."/>
            <person name="Forsburg S.L."/>
            <person name="Cerutti L."/>
            <person name="Lowe T."/>
            <person name="McCombie W.R."/>
            <person name="Paulsen I."/>
            <person name="Potashkin J."/>
            <person name="Shpakovski G.V."/>
            <person name="Ussery D."/>
            <person name="Barrell B.G."/>
            <person name="Nurse P."/>
        </authorList>
    </citation>
    <scope>NUCLEOTIDE SEQUENCE [LARGE SCALE GENOMIC DNA]</scope>
    <source>
        <strain>972 / ATCC 24843</strain>
    </source>
</reference>
<reference key="2">
    <citation type="journal article" date="2002" name="Mol. Cell. Biol.">
        <title>Proteomics analysis reveals stable multiprotein complexes in both fission and budding yeasts containing Myb-related Cdc5p/Cef1p, novel pre-mRNA splicing factors, and snRNAs.</title>
        <authorList>
            <person name="Ohi M.D."/>
            <person name="Link A.J."/>
            <person name="Ren L."/>
            <person name="Jennings J.L."/>
            <person name="McDonald W.H."/>
            <person name="Gould K.L."/>
        </authorList>
    </citation>
    <scope>IDENTIFICATION IN THE CWF COMPLEX</scope>
    <scope>IDENTIFICATION BY MASS SPECTROMETRY</scope>
</reference>
<reference key="3">
    <citation type="journal article" date="2006" name="Nat. Biotechnol.">
        <title>ORFeome cloning and global analysis of protein localization in the fission yeast Schizosaccharomyces pombe.</title>
        <authorList>
            <person name="Matsuyama A."/>
            <person name="Arai R."/>
            <person name="Yashiroda Y."/>
            <person name="Shirai A."/>
            <person name="Kamata A."/>
            <person name="Sekido S."/>
            <person name="Kobayashi Y."/>
            <person name="Hashimoto A."/>
            <person name="Hamamoto M."/>
            <person name="Hiraoka Y."/>
            <person name="Horinouchi S."/>
            <person name="Yoshida M."/>
        </authorList>
    </citation>
    <scope>SUBCELLULAR LOCATION [LARGE SCALE ANALYSIS]</scope>
</reference>
<gene>
    <name type="primary">smd2</name>
    <name type="synonym">cwf9</name>
    <name type="ORF">SPAC2C4.03c</name>
</gene>
<dbReference type="EMBL" id="CU329670">
    <property type="protein sequence ID" value="CAB16363.1"/>
    <property type="molecule type" value="Genomic_DNA"/>
</dbReference>
<dbReference type="PIR" id="T38514">
    <property type="entry name" value="T38514"/>
</dbReference>
<dbReference type="RefSeq" id="NP_594506.1">
    <property type="nucleotide sequence ID" value="NM_001019935.2"/>
</dbReference>
<dbReference type="PDB" id="3JB9">
    <property type="method" value="EM"/>
    <property type="resolution" value="3.60 A"/>
    <property type="chains" value="G/l=1-115"/>
</dbReference>
<dbReference type="PDB" id="9ESH">
    <property type="method" value="EM"/>
    <property type="resolution" value="3.20 A"/>
    <property type="chains" value="G=1-115"/>
</dbReference>
<dbReference type="PDB" id="9ESI">
    <property type="method" value="EM"/>
    <property type="resolution" value="3.10 A"/>
    <property type="chains" value="G=1-115"/>
</dbReference>
<dbReference type="PDBsum" id="3JB9"/>
<dbReference type="PDBsum" id="9ESH"/>
<dbReference type="PDBsum" id="9ESI"/>
<dbReference type="EMDB" id="EMD-19941"/>
<dbReference type="EMDB" id="EMD-19942"/>
<dbReference type="SMR" id="O14036"/>
<dbReference type="BioGRID" id="278940">
    <property type="interactions" value="24"/>
</dbReference>
<dbReference type="FunCoup" id="O14036">
    <property type="interactions" value="908"/>
</dbReference>
<dbReference type="IntAct" id="O14036">
    <property type="interactions" value="6"/>
</dbReference>
<dbReference type="STRING" id="284812.O14036"/>
<dbReference type="iPTMnet" id="O14036"/>
<dbReference type="PaxDb" id="4896-SPAC2C4.03c.1"/>
<dbReference type="EnsemblFungi" id="SPAC2C4.03c.1">
    <property type="protein sequence ID" value="SPAC2C4.03c.1:pep"/>
    <property type="gene ID" value="SPAC2C4.03c"/>
</dbReference>
<dbReference type="GeneID" id="2542480"/>
<dbReference type="KEGG" id="spo:2542480"/>
<dbReference type="PomBase" id="SPAC2C4.03c">
    <property type="gene designation" value="smd2"/>
</dbReference>
<dbReference type="VEuPathDB" id="FungiDB:SPAC2C4.03c"/>
<dbReference type="eggNOG" id="KOG3459">
    <property type="taxonomic scope" value="Eukaryota"/>
</dbReference>
<dbReference type="HOGENOM" id="CLU_076902_2_1_1"/>
<dbReference type="InParanoid" id="O14036"/>
<dbReference type="OMA" id="DVKEMWT"/>
<dbReference type="PhylomeDB" id="O14036"/>
<dbReference type="Reactome" id="R-SPO-72163">
    <property type="pathway name" value="mRNA Splicing - Major Pathway"/>
</dbReference>
<dbReference type="EvolutionaryTrace" id="O14036"/>
<dbReference type="PRO" id="PR:O14036"/>
<dbReference type="Proteomes" id="UP000002485">
    <property type="component" value="Chromosome I"/>
</dbReference>
<dbReference type="GO" id="GO:0071013">
    <property type="term" value="C:catalytic step 2 spliceosome"/>
    <property type="evidence" value="ECO:0000318"/>
    <property type="project" value="GO_Central"/>
</dbReference>
<dbReference type="GO" id="GO:0005829">
    <property type="term" value="C:cytosol"/>
    <property type="evidence" value="ECO:0007669"/>
    <property type="project" value="UniProtKB-SubCell"/>
</dbReference>
<dbReference type="GO" id="GO:0005634">
    <property type="term" value="C:nucleus"/>
    <property type="evidence" value="ECO:0007005"/>
    <property type="project" value="PomBase"/>
</dbReference>
<dbReference type="GO" id="GO:0034715">
    <property type="term" value="C:pICln-Sm protein complex"/>
    <property type="evidence" value="ECO:0000318"/>
    <property type="project" value="GO_Central"/>
</dbReference>
<dbReference type="GO" id="GO:0071014">
    <property type="term" value="C:post-mRNA release spliceosomal complex"/>
    <property type="evidence" value="ECO:0000314"/>
    <property type="project" value="PomBase"/>
</dbReference>
<dbReference type="GO" id="GO:0071011">
    <property type="term" value="C:precatalytic spliceosome"/>
    <property type="evidence" value="ECO:0000318"/>
    <property type="project" value="GO_Central"/>
</dbReference>
<dbReference type="GO" id="GO:0000974">
    <property type="term" value="C:Prp19 complex"/>
    <property type="evidence" value="ECO:0000314"/>
    <property type="project" value="PomBase"/>
</dbReference>
<dbReference type="GO" id="GO:0005681">
    <property type="term" value="C:spliceosomal complex"/>
    <property type="evidence" value="ECO:0000314"/>
    <property type="project" value="PomBase"/>
</dbReference>
<dbReference type="GO" id="GO:0005685">
    <property type="term" value="C:U1 snRNP"/>
    <property type="evidence" value="ECO:0000314"/>
    <property type="project" value="PomBase"/>
</dbReference>
<dbReference type="GO" id="GO:0005686">
    <property type="term" value="C:U2 snRNP"/>
    <property type="evidence" value="ECO:0000314"/>
    <property type="project" value="PomBase"/>
</dbReference>
<dbReference type="GO" id="GO:0071004">
    <property type="term" value="C:U2-type prespliceosome"/>
    <property type="evidence" value="ECO:0000266"/>
    <property type="project" value="PomBase"/>
</dbReference>
<dbReference type="GO" id="GO:0046540">
    <property type="term" value="C:U4/U6 x U5 tri-snRNP complex"/>
    <property type="evidence" value="ECO:0000318"/>
    <property type="project" value="GO_Central"/>
</dbReference>
<dbReference type="GO" id="GO:0005682">
    <property type="term" value="C:U5 snRNP"/>
    <property type="evidence" value="ECO:0000314"/>
    <property type="project" value="PomBase"/>
</dbReference>
<dbReference type="GO" id="GO:0003723">
    <property type="term" value="F:RNA binding"/>
    <property type="evidence" value="ECO:0007669"/>
    <property type="project" value="InterPro"/>
</dbReference>
<dbReference type="GO" id="GO:0000395">
    <property type="term" value="P:mRNA 5'-splice site recognition"/>
    <property type="evidence" value="ECO:0000305"/>
    <property type="project" value="PomBase"/>
</dbReference>
<dbReference type="GO" id="GO:0045292">
    <property type="term" value="P:mRNA cis splicing, via spliceosome"/>
    <property type="evidence" value="ECO:0000269"/>
    <property type="project" value="PomBase"/>
</dbReference>
<dbReference type="GO" id="GO:0000387">
    <property type="term" value="P:spliceosomal snRNP assembly"/>
    <property type="evidence" value="ECO:0000318"/>
    <property type="project" value="GO_Central"/>
</dbReference>
<dbReference type="CDD" id="cd01720">
    <property type="entry name" value="Sm_D2"/>
    <property type="match status" value="1"/>
</dbReference>
<dbReference type="FunFam" id="2.30.30.100:FF:000018">
    <property type="entry name" value="Small nuclear ribonucleoprotein Sm D2"/>
    <property type="match status" value="1"/>
</dbReference>
<dbReference type="Gene3D" id="2.30.30.100">
    <property type="match status" value="1"/>
</dbReference>
<dbReference type="InterPro" id="IPR010920">
    <property type="entry name" value="LSM_dom_sf"/>
</dbReference>
<dbReference type="InterPro" id="IPR047575">
    <property type="entry name" value="Sm"/>
</dbReference>
<dbReference type="InterPro" id="IPR027248">
    <property type="entry name" value="Sm_D2"/>
</dbReference>
<dbReference type="InterPro" id="IPR001163">
    <property type="entry name" value="Sm_dom_euk/arc"/>
</dbReference>
<dbReference type="PANTHER" id="PTHR12777">
    <property type="entry name" value="SMALL NUCLEAR RIBONUCLEOPROTEIN SM D2"/>
    <property type="match status" value="1"/>
</dbReference>
<dbReference type="Pfam" id="PF01423">
    <property type="entry name" value="LSM"/>
    <property type="match status" value="1"/>
</dbReference>
<dbReference type="SMART" id="SM00651">
    <property type="entry name" value="Sm"/>
    <property type="match status" value="1"/>
</dbReference>
<dbReference type="SUPFAM" id="SSF50182">
    <property type="entry name" value="Sm-like ribonucleoproteins"/>
    <property type="match status" value="1"/>
</dbReference>
<dbReference type="PROSITE" id="PS52002">
    <property type="entry name" value="SM"/>
    <property type="match status" value="1"/>
</dbReference>